<feature type="signal peptide" evidence="2">
    <location>
        <begin position="1"/>
        <end position="20"/>
    </location>
</feature>
<feature type="peptide" id="PRO_0000285787" description="Beta-defensin 119">
    <location>
        <begin position="21"/>
        <end position="83"/>
    </location>
</feature>
<feature type="disulfide bond" evidence="1">
    <location>
        <begin position="27"/>
        <end position="54"/>
    </location>
</feature>
<feature type="disulfide bond" evidence="1">
    <location>
        <begin position="34"/>
        <end position="48"/>
    </location>
</feature>
<feature type="disulfide bond" evidence="1">
    <location>
        <begin position="38"/>
        <end position="55"/>
    </location>
</feature>
<sequence>MKFLFLFLAILLAMEPVVSGRRHMLRCMGDLGICRPACRQSEEPYLYCRNYQPCCLPFYVRIDISGKEGKNDWSRENRWPKVS</sequence>
<evidence type="ECO:0000250" key="1"/>
<evidence type="ECO:0000255" key="2"/>
<evidence type="ECO:0000305" key="3"/>
<organism>
    <name type="scientific">Bos taurus</name>
    <name type="common">Bovine</name>
    <dbReference type="NCBI Taxonomy" id="9913"/>
    <lineage>
        <taxon>Eukaryota</taxon>
        <taxon>Metazoa</taxon>
        <taxon>Chordata</taxon>
        <taxon>Craniata</taxon>
        <taxon>Vertebrata</taxon>
        <taxon>Euteleostomi</taxon>
        <taxon>Mammalia</taxon>
        <taxon>Eutheria</taxon>
        <taxon>Laurasiatheria</taxon>
        <taxon>Artiodactyla</taxon>
        <taxon>Ruminantia</taxon>
        <taxon>Pecora</taxon>
        <taxon>Bovidae</taxon>
        <taxon>Bovinae</taxon>
        <taxon>Bos</taxon>
    </lineage>
</organism>
<keyword id="KW-0044">Antibiotic</keyword>
<keyword id="KW-0929">Antimicrobial</keyword>
<keyword id="KW-0211">Defensin</keyword>
<keyword id="KW-1015">Disulfide bond</keyword>
<keyword id="KW-1185">Reference proteome</keyword>
<keyword id="KW-0964">Secreted</keyword>
<keyword id="KW-0732">Signal</keyword>
<comment type="function">
    <text evidence="3">Has antibacterial activity.</text>
</comment>
<comment type="subcellular location">
    <subcellularLocation>
        <location evidence="3">Secreted</location>
    </subcellularLocation>
</comment>
<comment type="similarity">
    <text evidence="3">Belongs to the beta-defensin family.</text>
</comment>
<dbReference type="EMBL" id="EU036209">
    <property type="protein sequence ID" value="ABS86885.1"/>
    <property type="molecule type" value="mRNA"/>
</dbReference>
<dbReference type="EMBL" id="BC108216">
    <property type="protein sequence ID" value="AAI08217.1"/>
    <property type="molecule type" value="mRNA"/>
</dbReference>
<dbReference type="RefSeq" id="NP_001095131.1">
    <property type="nucleotide sequence ID" value="NM_001101661.3"/>
</dbReference>
<dbReference type="STRING" id="9913.ENSBTAP00000060931"/>
<dbReference type="PaxDb" id="9913-ENSBTAP00000004362"/>
<dbReference type="GeneID" id="767957"/>
<dbReference type="KEGG" id="bta:767957"/>
<dbReference type="CTD" id="245932"/>
<dbReference type="VEuPathDB" id="HostDB:ENSBTAG00000003364"/>
<dbReference type="eggNOG" id="ENOG502TDXM">
    <property type="taxonomic scope" value="Eukaryota"/>
</dbReference>
<dbReference type="HOGENOM" id="CLU_193927_0_0_1"/>
<dbReference type="InParanoid" id="Q32P86"/>
<dbReference type="OMA" id="QENRWPK"/>
<dbReference type="OrthoDB" id="9624411at2759"/>
<dbReference type="Reactome" id="R-BTA-1461957">
    <property type="pathway name" value="Beta defensins"/>
</dbReference>
<dbReference type="Reactome" id="R-BTA-1461973">
    <property type="pathway name" value="Defensins"/>
</dbReference>
<dbReference type="Proteomes" id="UP000009136">
    <property type="component" value="Chromosome 13"/>
</dbReference>
<dbReference type="Bgee" id="ENSBTAG00000003364">
    <property type="expression patterns" value="Expressed in caput epididymis and 26 other cell types or tissues"/>
</dbReference>
<dbReference type="GO" id="GO:0005576">
    <property type="term" value="C:extracellular region"/>
    <property type="evidence" value="ECO:0007669"/>
    <property type="project" value="UniProtKB-SubCell"/>
</dbReference>
<dbReference type="GO" id="GO:0050829">
    <property type="term" value="P:defense response to Gram-negative bacterium"/>
    <property type="evidence" value="ECO:0007669"/>
    <property type="project" value="InterPro"/>
</dbReference>
<dbReference type="GO" id="GO:0050830">
    <property type="term" value="P:defense response to Gram-positive bacterium"/>
    <property type="evidence" value="ECO:0007669"/>
    <property type="project" value="InterPro"/>
</dbReference>
<dbReference type="InterPro" id="IPR028060">
    <property type="entry name" value="Defensin_big_dom"/>
</dbReference>
<dbReference type="PANTHER" id="PTHR47902">
    <property type="entry name" value="BETA-DEFENSIN 119"/>
    <property type="match status" value="1"/>
</dbReference>
<dbReference type="PANTHER" id="PTHR47902:SF1">
    <property type="entry name" value="BETA-DEFENSIN 119"/>
    <property type="match status" value="1"/>
</dbReference>
<dbReference type="Pfam" id="PF14862">
    <property type="entry name" value="Defensin_big"/>
    <property type="match status" value="1"/>
</dbReference>
<protein>
    <recommendedName>
        <fullName>Beta-defensin 119</fullName>
    </recommendedName>
    <alternativeName>
        <fullName>Defensin, beta 119</fullName>
    </alternativeName>
</protein>
<accession>Q32P86</accession>
<accession>A7LM95</accession>
<gene>
    <name type="primary">DEFB119</name>
</gene>
<name>DB119_BOVIN</name>
<proteinExistence type="inferred from homology"/>
<reference key="1">
    <citation type="submission" date="2007-07" db="EMBL/GenBank/DDBJ databases">
        <title>Novel bovine AMPs exhibit constitutive tissue-specific gene expression and significant in vitro antimicrobial efficacy against Escherichia coli, Salmonella typhimurium, Stapylococcus aureus and Listeria monocytogenes.</title>
        <authorList>
            <person name="Cormican P."/>
            <person name="Meade K.G."/>
            <person name="Lloyd A.T."/>
            <person name="Cahalane S."/>
            <person name="Narciandi F."/>
            <person name="O'Farrelly C."/>
        </authorList>
    </citation>
    <scope>NUCLEOTIDE SEQUENCE [MRNA]</scope>
</reference>
<reference key="2">
    <citation type="submission" date="2005-10" db="EMBL/GenBank/DDBJ databases">
        <authorList>
            <consortium name="NIH - Mammalian Gene Collection (MGC) project"/>
        </authorList>
    </citation>
    <scope>NUCLEOTIDE SEQUENCE [LARGE SCALE MRNA]</scope>
    <source>
        <strain>Crossbred X Angus</strain>
        <tissue>Liver</tissue>
    </source>
</reference>